<dbReference type="EC" id="2.1.2.3" evidence="1"/>
<dbReference type="EC" id="3.5.4.10" evidence="1"/>
<dbReference type="EMBL" id="CP000614">
    <property type="protein sequence ID" value="ABO53668.1"/>
    <property type="molecule type" value="Genomic_DNA"/>
</dbReference>
<dbReference type="SMR" id="A4JBL5"/>
<dbReference type="KEGG" id="bvi:Bcep1808_0656"/>
<dbReference type="eggNOG" id="COG0138">
    <property type="taxonomic scope" value="Bacteria"/>
</dbReference>
<dbReference type="HOGENOM" id="CLU_016316_5_2_4"/>
<dbReference type="UniPathway" id="UPA00074">
    <property type="reaction ID" value="UER00133"/>
</dbReference>
<dbReference type="UniPathway" id="UPA00074">
    <property type="reaction ID" value="UER00135"/>
</dbReference>
<dbReference type="Proteomes" id="UP000002287">
    <property type="component" value="Chromosome 1"/>
</dbReference>
<dbReference type="GO" id="GO:0005829">
    <property type="term" value="C:cytosol"/>
    <property type="evidence" value="ECO:0007669"/>
    <property type="project" value="TreeGrafter"/>
</dbReference>
<dbReference type="GO" id="GO:0003937">
    <property type="term" value="F:IMP cyclohydrolase activity"/>
    <property type="evidence" value="ECO:0007669"/>
    <property type="project" value="UniProtKB-UniRule"/>
</dbReference>
<dbReference type="GO" id="GO:0004643">
    <property type="term" value="F:phosphoribosylaminoimidazolecarboxamide formyltransferase activity"/>
    <property type="evidence" value="ECO:0007669"/>
    <property type="project" value="UniProtKB-UniRule"/>
</dbReference>
<dbReference type="GO" id="GO:0006189">
    <property type="term" value="P:'de novo' IMP biosynthetic process"/>
    <property type="evidence" value="ECO:0007669"/>
    <property type="project" value="UniProtKB-UniRule"/>
</dbReference>
<dbReference type="CDD" id="cd01421">
    <property type="entry name" value="IMPCH"/>
    <property type="match status" value="1"/>
</dbReference>
<dbReference type="FunFam" id="3.40.140.20:FF:000001">
    <property type="entry name" value="Bifunctional purine biosynthesis protein PurH"/>
    <property type="match status" value="1"/>
</dbReference>
<dbReference type="FunFam" id="3.40.140.20:FF:000002">
    <property type="entry name" value="Bifunctional purine biosynthesis protein PurH"/>
    <property type="match status" value="1"/>
</dbReference>
<dbReference type="FunFam" id="3.40.50.1380:FF:000001">
    <property type="entry name" value="Bifunctional purine biosynthesis protein PurH"/>
    <property type="match status" value="1"/>
</dbReference>
<dbReference type="Gene3D" id="3.40.140.20">
    <property type="match status" value="2"/>
</dbReference>
<dbReference type="Gene3D" id="3.40.50.1380">
    <property type="entry name" value="Methylglyoxal synthase-like domain"/>
    <property type="match status" value="1"/>
</dbReference>
<dbReference type="HAMAP" id="MF_00139">
    <property type="entry name" value="PurH"/>
    <property type="match status" value="1"/>
</dbReference>
<dbReference type="InterPro" id="IPR024051">
    <property type="entry name" value="AICAR_Tfase_dup_dom_sf"/>
</dbReference>
<dbReference type="InterPro" id="IPR016193">
    <property type="entry name" value="Cytidine_deaminase-like"/>
</dbReference>
<dbReference type="InterPro" id="IPR011607">
    <property type="entry name" value="MGS-like_dom"/>
</dbReference>
<dbReference type="InterPro" id="IPR036914">
    <property type="entry name" value="MGS-like_dom_sf"/>
</dbReference>
<dbReference type="InterPro" id="IPR002695">
    <property type="entry name" value="PurH-like"/>
</dbReference>
<dbReference type="NCBIfam" id="NF002049">
    <property type="entry name" value="PRK00881.1"/>
    <property type="match status" value="1"/>
</dbReference>
<dbReference type="NCBIfam" id="TIGR00355">
    <property type="entry name" value="purH"/>
    <property type="match status" value="1"/>
</dbReference>
<dbReference type="PANTHER" id="PTHR11692:SF0">
    <property type="entry name" value="BIFUNCTIONAL PURINE BIOSYNTHESIS PROTEIN ATIC"/>
    <property type="match status" value="1"/>
</dbReference>
<dbReference type="PANTHER" id="PTHR11692">
    <property type="entry name" value="BIFUNCTIONAL PURINE BIOSYNTHESIS PROTEIN PURH"/>
    <property type="match status" value="1"/>
</dbReference>
<dbReference type="Pfam" id="PF01808">
    <property type="entry name" value="AICARFT_IMPCHas"/>
    <property type="match status" value="1"/>
</dbReference>
<dbReference type="Pfam" id="PF02142">
    <property type="entry name" value="MGS"/>
    <property type="match status" value="1"/>
</dbReference>
<dbReference type="PIRSF" id="PIRSF000414">
    <property type="entry name" value="AICARFT_IMPCHas"/>
    <property type="match status" value="1"/>
</dbReference>
<dbReference type="SMART" id="SM00798">
    <property type="entry name" value="AICARFT_IMPCHas"/>
    <property type="match status" value="1"/>
</dbReference>
<dbReference type="SMART" id="SM00851">
    <property type="entry name" value="MGS"/>
    <property type="match status" value="1"/>
</dbReference>
<dbReference type="SUPFAM" id="SSF53927">
    <property type="entry name" value="Cytidine deaminase-like"/>
    <property type="match status" value="1"/>
</dbReference>
<dbReference type="SUPFAM" id="SSF52335">
    <property type="entry name" value="Methylglyoxal synthase-like"/>
    <property type="match status" value="1"/>
</dbReference>
<dbReference type="PROSITE" id="PS51855">
    <property type="entry name" value="MGS"/>
    <property type="match status" value="1"/>
</dbReference>
<evidence type="ECO:0000255" key="1">
    <source>
        <dbReference type="HAMAP-Rule" id="MF_00139"/>
    </source>
</evidence>
<evidence type="ECO:0000255" key="2">
    <source>
        <dbReference type="PROSITE-ProRule" id="PRU01202"/>
    </source>
</evidence>
<protein>
    <recommendedName>
        <fullName evidence="1">Bifunctional purine biosynthesis protein PurH</fullName>
    </recommendedName>
    <domain>
        <recommendedName>
            <fullName evidence="1">Phosphoribosylaminoimidazolecarboxamide formyltransferase</fullName>
            <ecNumber evidence="1">2.1.2.3</ecNumber>
        </recommendedName>
        <alternativeName>
            <fullName evidence="1">AICAR transformylase</fullName>
        </alternativeName>
    </domain>
    <domain>
        <recommendedName>
            <fullName evidence="1">IMP cyclohydrolase</fullName>
            <ecNumber evidence="1">3.5.4.10</ecNumber>
        </recommendedName>
        <alternativeName>
            <fullName evidence="1">ATIC</fullName>
        </alternativeName>
        <alternativeName>
            <fullName evidence="1">IMP synthase</fullName>
        </alternativeName>
        <alternativeName>
            <fullName evidence="1">Inosinicase</fullName>
        </alternativeName>
    </domain>
</protein>
<sequence length="521" mass="55485">MIKQALISVSDKTGIVDFAKSLSDLGVKLLSTGGTAKLLADAGLPVTEVADYTGFPEMLDGRVKTLHPKVHGGILARRDLPEHMQALEQHDIPTIDLLVVNLYPFVATIAKDDCTLADAIENIDIGGPTMLRSAAKNHRDVTVVVDPADYAVVLDEMKANGNAIGYATNFRLATKVFAHTAQYDGAITNYLTSLTDELQHASRSTYPATLNLAFDKVQDLRYGENPHQSAAFYRDLAAPAGALANYRQLQGKELSYNNIADSDAAWECVKTFDAPACVIIKHANPCGVAVGNDPADAYAKAFQTDPTSAFGGIIAFNREVDEAAAQAVAKQFVEVLIAPSFSAAAQQVFAAKQNVRLLEIALGDGHNAFDLKRVGGGLLVQSLDSRNVQPSELRVVTKRQPSAKEMDDLLFAWRVAKYVKSNAIVFCGNGMTLGVGAGQMSRVDSARIASIKAQNAGLTLAGSAVASDAFFPFRDGLDVVVAAGATCVIQPGGSMRDDEVIAAADEHGIAMVLTGVRHFRH</sequence>
<organism>
    <name type="scientific">Burkholderia vietnamiensis (strain G4 / LMG 22486)</name>
    <name type="common">Burkholderia cepacia (strain R1808)</name>
    <dbReference type="NCBI Taxonomy" id="269482"/>
    <lineage>
        <taxon>Bacteria</taxon>
        <taxon>Pseudomonadati</taxon>
        <taxon>Pseudomonadota</taxon>
        <taxon>Betaproteobacteria</taxon>
        <taxon>Burkholderiales</taxon>
        <taxon>Burkholderiaceae</taxon>
        <taxon>Burkholderia</taxon>
        <taxon>Burkholderia cepacia complex</taxon>
    </lineage>
</organism>
<keyword id="KW-0378">Hydrolase</keyword>
<keyword id="KW-0511">Multifunctional enzyme</keyword>
<keyword id="KW-0658">Purine biosynthesis</keyword>
<keyword id="KW-0808">Transferase</keyword>
<name>PUR9_BURVG</name>
<accession>A4JBL5</accession>
<feature type="chain" id="PRO_1000018864" description="Bifunctional purine biosynthesis protein PurH">
    <location>
        <begin position="1"/>
        <end position="521"/>
    </location>
</feature>
<feature type="domain" description="MGS-like" evidence="2">
    <location>
        <begin position="1"/>
        <end position="145"/>
    </location>
</feature>
<comment type="catalytic activity">
    <reaction evidence="1">
        <text>(6R)-10-formyltetrahydrofolate + 5-amino-1-(5-phospho-beta-D-ribosyl)imidazole-4-carboxamide = 5-formamido-1-(5-phospho-D-ribosyl)imidazole-4-carboxamide + (6S)-5,6,7,8-tetrahydrofolate</text>
        <dbReference type="Rhea" id="RHEA:22192"/>
        <dbReference type="ChEBI" id="CHEBI:57453"/>
        <dbReference type="ChEBI" id="CHEBI:58467"/>
        <dbReference type="ChEBI" id="CHEBI:58475"/>
        <dbReference type="ChEBI" id="CHEBI:195366"/>
        <dbReference type="EC" id="2.1.2.3"/>
    </reaction>
</comment>
<comment type="catalytic activity">
    <reaction evidence="1">
        <text>IMP + H2O = 5-formamido-1-(5-phospho-D-ribosyl)imidazole-4-carboxamide</text>
        <dbReference type="Rhea" id="RHEA:18445"/>
        <dbReference type="ChEBI" id="CHEBI:15377"/>
        <dbReference type="ChEBI" id="CHEBI:58053"/>
        <dbReference type="ChEBI" id="CHEBI:58467"/>
        <dbReference type="EC" id="3.5.4.10"/>
    </reaction>
</comment>
<comment type="pathway">
    <text evidence="1">Purine metabolism; IMP biosynthesis via de novo pathway; 5-formamido-1-(5-phospho-D-ribosyl)imidazole-4-carboxamide from 5-amino-1-(5-phospho-D-ribosyl)imidazole-4-carboxamide (10-formyl THF route): step 1/1.</text>
</comment>
<comment type="pathway">
    <text evidence="1">Purine metabolism; IMP biosynthesis via de novo pathway; IMP from 5-formamido-1-(5-phospho-D-ribosyl)imidazole-4-carboxamide: step 1/1.</text>
</comment>
<comment type="domain">
    <text evidence="1">The IMP cyclohydrolase activity resides in the N-terminal region.</text>
</comment>
<comment type="similarity">
    <text evidence="1">Belongs to the PurH family.</text>
</comment>
<reference key="1">
    <citation type="submission" date="2007-03" db="EMBL/GenBank/DDBJ databases">
        <title>Complete sequence of chromosome 1 of Burkholderia vietnamiensis G4.</title>
        <authorList>
            <consortium name="US DOE Joint Genome Institute"/>
            <person name="Copeland A."/>
            <person name="Lucas S."/>
            <person name="Lapidus A."/>
            <person name="Barry K."/>
            <person name="Detter J.C."/>
            <person name="Glavina del Rio T."/>
            <person name="Hammon N."/>
            <person name="Israni S."/>
            <person name="Dalin E."/>
            <person name="Tice H."/>
            <person name="Pitluck S."/>
            <person name="Chain P."/>
            <person name="Malfatti S."/>
            <person name="Shin M."/>
            <person name="Vergez L."/>
            <person name="Schmutz J."/>
            <person name="Larimer F."/>
            <person name="Land M."/>
            <person name="Hauser L."/>
            <person name="Kyrpides N."/>
            <person name="Tiedje J."/>
            <person name="Richardson P."/>
        </authorList>
    </citation>
    <scope>NUCLEOTIDE SEQUENCE [LARGE SCALE GENOMIC DNA]</scope>
    <source>
        <strain>G4 / LMG 22486</strain>
    </source>
</reference>
<proteinExistence type="inferred from homology"/>
<gene>
    <name evidence="1" type="primary">purH</name>
    <name type="ordered locus">Bcep1808_0656</name>
</gene>